<evidence type="ECO:0000255" key="1">
    <source>
        <dbReference type="HAMAP-Rule" id="MF_00321"/>
    </source>
</evidence>
<feature type="chain" id="PRO_0000266926" description="Probable GTP-binding protein EngB">
    <location>
        <begin position="1"/>
        <end position="217"/>
    </location>
</feature>
<feature type="domain" description="EngB-type G" evidence="1">
    <location>
        <begin position="29"/>
        <end position="213"/>
    </location>
</feature>
<feature type="binding site" evidence="1">
    <location>
        <begin position="37"/>
        <end position="44"/>
    </location>
    <ligand>
        <name>GTP</name>
        <dbReference type="ChEBI" id="CHEBI:37565"/>
    </ligand>
</feature>
<feature type="binding site" evidence="1">
    <location>
        <position position="44"/>
    </location>
    <ligand>
        <name>Mg(2+)</name>
        <dbReference type="ChEBI" id="CHEBI:18420"/>
    </ligand>
</feature>
<feature type="binding site" evidence="1">
    <location>
        <begin position="64"/>
        <end position="68"/>
    </location>
    <ligand>
        <name>GTP</name>
        <dbReference type="ChEBI" id="CHEBI:37565"/>
    </ligand>
</feature>
<feature type="binding site" evidence="1">
    <location>
        <position position="66"/>
    </location>
    <ligand>
        <name>Mg(2+)</name>
        <dbReference type="ChEBI" id="CHEBI:18420"/>
    </ligand>
</feature>
<feature type="binding site" evidence="1">
    <location>
        <begin position="91"/>
        <end position="94"/>
    </location>
    <ligand>
        <name>GTP</name>
        <dbReference type="ChEBI" id="CHEBI:37565"/>
    </ligand>
</feature>
<feature type="binding site" evidence="1">
    <location>
        <begin position="158"/>
        <end position="161"/>
    </location>
    <ligand>
        <name>GTP</name>
        <dbReference type="ChEBI" id="CHEBI:37565"/>
    </ligand>
</feature>
<feature type="binding site" evidence="1">
    <location>
        <begin position="192"/>
        <end position="194"/>
    </location>
    <ligand>
        <name>GTP</name>
        <dbReference type="ChEBI" id="CHEBI:37565"/>
    </ligand>
</feature>
<comment type="function">
    <text evidence="1">Necessary for normal cell division and for the maintenance of normal septation.</text>
</comment>
<comment type="cofactor">
    <cofactor evidence="1">
        <name>Mg(2+)</name>
        <dbReference type="ChEBI" id="CHEBI:18420"/>
    </cofactor>
</comment>
<comment type="similarity">
    <text evidence="1">Belongs to the TRAFAC class TrmE-Era-EngA-EngB-Septin-like GTPase superfamily. EngB GTPase family.</text>
</comment>
<name>ENGB_RHIEC</name>
<organism>
    <name type="scientific">Rhizobium etli (strain ATCC 51251 / DSM 11541 / JCM 21823 / NBRC 15573 / CFN 42)</name>
    <dbReference type="NCBI Taxonomy" id="347834"/>
    <lineage>
        <taxon>Bacteria</taxon>
        <taxon>Pseudomonadati</taxon>
        <taxon>Pseudomonadota</taxon>
        <taxon>Alphaproteobacteria</taxon>
        <taxon>Hyphomicrobiales</taxon>
        <taxon>Rhizobiaceae</taxon>
        <taxon>Rhizobium/Agrobacterium group</taxon>
        <taxon>Rhizobium</taxon>
    </lineage>
</organism>
<sequence>MPETEKPLFGHPWIFIRGVPSLNFLPPEGPPEVAFAGRSNVGKSSLINALVSQKGLARTSNTPGRTQELNYFVPDGYSGEAGDLPPMAIVDMPGYGYAQAPKEQVDKWTKLVFDYLRGRATLKRVYVLIDSRHGIKKNDDDVLDLLDKAAVSYQLVLTKTDKIKAPAVPKLLAETADKIRKRPAAYPYLLSTSSEKGDGLDELRQAIAETVGIANWK</sequence>
<reference key="1">
    <citation type="journal article" date="2006" name="Proc. Natl. Acad. Sci. U.S.A.">
        <title>The partitioned Rhizobium etli genome: genetic and metabolic redundancy in seven interacting replicons.</title>
        <authorList>
            <person name="Gonzalez V."/>
            <person name="Santamaria R.I."/>
            <person name="Bustos P."/>
            <person name="Hernandez-Gonzalez I."/>
            <person name="Medrano-Soto A."/>
            <person name="Moreno-Hagelsieb G."/>
            <person name="Janga S.C."/>
            <person name="Ramirez M.A."/>
            <person name="Jimenez-Jacinto V."/>
            <person name="Collado-Vides J."/>
            <person name="Davila G."/>
        </authorList>
    </citation>
    <scope>NUCLEOTIDE SEQUENCE [LARGE SCALE GENOMIC DNA]</scope>
    <source>
        <strain>ATCC 51251 / DSM 11541 / JCM 21823 / NBRC 15573 / CFN 42</strain>
    </source>
</reference>
<accession>Q2KD28</accession>
<keyword id="KW-0131">Cell cycle</keyword>
<keyword id="KW-0132">Cell division</keyword>
<keyword id="KW-0342">GTP-binding</keyword>
<keyword id="KW-0460">Magnesium</keyword>
<keyword id="KW-0479">Metal-binding</keyword>
<keyword id="KW-0547">Nucleotide-binding</keyword>
<keyword id="KW-1185">Reference proteome</keyword>
<keyword id="KW-0717">Septation</keyword>
<protein>
    <recommendedName>
        <fullName evidence="1">Probable GTP-binding protein EngB</fullName>
    </recommendedName>
</protein>
<gene>
    <name evidence="1" type="primary">engB</name>
    <name type="ordered locus">RHE_CH00436</name>
</gene>
<proteinExistence type="inferred from homology"/>
<dbReference type="EMBL" id="CP000133">
    <property type="protein sequence ID" value="ABC89258.1"/>
    <property type="molecule type" value="Genomic_DNA"/>
</dbReference>
<dbReference type="RefSeq" id="WP_011423816.1">
    <property type="nucleotide sequence ID" value="NC_007761.1"/>
</dbReference>
<dbReference type="SMR" id="Q2KD28"/>
<dbReference type="KEGG" id="ret:RHE_CH00436"/>
<dbReference type="eggNOG" id="COG0218">
    <property type="taxonomic scope" value="Bacteria"/>
</dbReference>
<dbReference type="HOGENOM" id="CLU_033732_2_0_5"/>
<dbReference type="OrthoDB" id="9804921at2"/>
<dbReference type="Proteomes" id="UP000001936">
    <property type="component" value="Chromosome"/>
</dbReference>
<dbReference type="GO" id="GO:0005829">
    <property type="term" value="C:cytosol"/>
    <property type="evidence" value="ECO:0007669"/>
    <property type="project" value="TreeGrafter"/>
</dbReference>
<dbReference type="GO" id="GO:0005525">
    <property type="term" value="F:GTP binding"/>
    <property type="evidence" value="ECO:0007669"/>
    <property type="project" value="UniProtKB-UniRule"/>
</dbReference>
<dbReference type="GO" id="GO:0046872">
    <property type="term" value="F:metal ion binding"/>
    <property type="evidence" value="ECO:0007669"/>
    <property type="project" value="UniProtKB-KW"/>
</dbReference>
<dbReference type="GO" id="GO:0000917">
    <property type="term" value="P:division septum assembly"/>
    <property type="evidence" value="ECO:0007669"/>
    <property type="project" value="UniProtKB-KW"/>
</dbReference>
<dbReference type="CDD" id="cd01876">
    <property type="entry name" value="YihA_EngB"/>
    <property type="match status" value="1"/>
</dbReference>
<dbReference type="Gene3D" id="3.40.50.300">
    <property type="entry name" value="P-loop containing nucleotide triphosphate hydrolases"/>
    <property type="match status" value="1"/>
</dbReference>
<dbReference type="HAMAP" id="MF_00321">
    <property type="entry name" value="GTPase_EngB"/>
    <property type="match status" value="1"/>
</dbReference>
<dbReference type="InterPro" id="IPR030393">
    <property type="entry name" value="G_ENGB_dom"/>
</dbReference>
<dbReference type="InterPro" id="IPR006073">
    <property type="entry name" value="GTP-bd"/>
</dbReference>
<dbReference type="InterPro" id="IPR019987">
    <property type="entry name" value="GTP-bd_ribosome_bio_YsxC"/>
</dbReference>
<dbReference type="InterPro" id="IPR027417">
    <property type="entry name" value="P-loop_NTPase"/>
</dbReference>
<dbReference type="NCBIfam" id="TIGR03598">
    <property type="entry name" value="GTPase_YsxC"/>
    <property type="match status" value="1"/>
</dbReference>
<dbReference type="PANTHER" id="PTHR11649:SF13">
    <property type="entry name" value="ENGB-TYPE G DOMAIN-CONTAINING PROTEIN"/>
    <property type="match status" value="1"/>
</dbReference>
<dbReference type="PANTHER" id="PTHR11649">
    <property type="entry name" value="MSS1/TRME-RELATED GTP-BINDING PROTEIN"/>
    <property type="match status" value="1"/>
</dbReference>
<dbReference type="Pfam" id="PF01926">
    <property type="entry name" value="MMR_HSR1"/>
    <property type="match status" value="1"/>
</dbReference>
<dbReference type="SUPFAM" id="SSF52540">
    <property type="entry name" value="P-loop containing nucleoside triphosphate hydrolases"/>
    <property type="match status" value="1"/>
</dbReference>
<dbReference type="PROSITE" id="PS51706">
    <property type="entry name" value="G_ENGB"/>
    <property type="match status" value="1"/>
</dbReference>